<sequence>MAKTPTRKKSKKVIIDGIAHIHATFNNTIVMITDRHGNAICWSASGGSGFRGSRKSTPFAAQVTAGSCGEKALAFGMKNLEVRVKGPGPGRDSAIRGLNAQGLKIQSITDVTPIPHNGCRPSKKRRV</sequence>
<name>RS11_RUTMC</name>
<organism>
    <name type="scientific">Ruthia magnifica subsp. Calyptogena magnifica</name>
    <dbReference type="NCBI Taxonomy" id="413404"/>
    <lineage>
        <taxon>Bacteria</taxon>
        <taxon>Pseudomonadati</taxon>
        <taxon>Pseudomonadota</taxon>
        <taxon>Gammaproteobacteria</taxon>
        <taxon>Candidatus Pseudothioglobaceae</taxon>
        <taxon>Candidatus Ruthturnera</taxon>
    </lineage>
</organism>
<keyword id="KW-0687">Ribonucleoprotein</keyword>
<keyword id="KW-0689">Ribosomal protein</keyword>
<keyword id="KW-0694">RNA-binding</keyword>
<keyword id="KW-0699">rRNA-binding</keyword>
<accession>A1AVM3</accession>
<comment type="function">
    <text evidence="1">Located on the platform of the 30S subunit, it bridges several disparate RNA helices of the 16S rRNA. Forms part of the Shine-Dalgarno cleft in the 70S ribosome.</text>
</comment>
<comment type="subunit">
    <text evidence="1">Part of the 30S ribosomal subunit. Interacts with proteins S7 and S18. Binds to IF-3.</text>
</comment>
<comment type="similarity">
    <text evidence="1">Belongs to the universal ribosomal protein uS11 family.</text>
</comment>
<evidence type="ECO:0000255" key="1">
    <source>
        <dbReference type="HAMAP-Rule" id="MF_01310"/>
    </source>
</evidence>
<evidence type="ECO:0000305" key="2"/>
<gene>
    <name evidence="1" type="primary">rpsK</name>
    <name type="ordered locus">Rmag_0188</name>
</gene>
<protein>
    <recommendedName>
        <fullName evidence="1">Small ribosomal subunit protein uS11</fullName>
    </recommendedName>
    <alternativeName>
        <fullName evidence="2">30S ribosomal protein S11</fullName>
    </alternativeName>
</protein>
<feature type="chain" id="PRO_0000294844" description="Small ribosomal subunit protein uS11">
    <location>
        <begin position="1"/>
        <end position="127"/>
    </location>
</feature>
<proteinExistence type="inferred from homology"/>
<dbReference type="EMBL" id="CP000488">
    <property type="protein sequence ID" value="ABL01980.1"/>
    <property type="molecule type" value="Genomic_DNA"/>
</dbReference>
<dbReference type="RefSeq" id="WP_011737605.1">
    <property type="nucleotide sequence ID" value="NC_008610.1"/>
</dbReference>
<dbReference type="SMR" id="A1AVM3"/>
<dbReference type="STRING" id="413404.Rmag_0188"/>
<dbReference type="KEGG" id="rma:Rmag_0188"/>
<dbReference type="eggNOG" id="COG0100">
    <property type="taxonomic scope" value="Bacteria"/>
</dbReference>
<dbReference type="HOGENOM" id="CLU_072439_5_0_6"/>
<dbReference type="OrthoDB" id="9806415at2"/>
<dbReference type="Proteomes" id="UP000002587">
    <property type="component" value="Chromosome"/>
</dbReference>
<dbReference type="GO" id="GO:1990904">
    <property type="term" value="C:ribonucleoprotein complex"/>
    <property type="evidence" value="ECO:0007669"/>
    <property type="project" value="UniProtKB-KW"/>
</dbReference>
<dbReference type="GO" id="GO:0005840">
    <property type="term" value="C:ribosome"/>
    <property type="evidence" value="ECO:0007669"/>
    <property type="project" value="UniProtKB-KW"/>
</dbReference>
<dbReference type="GO" id="GO:0019843">
    <property type="term" value="F:rRNA binding"/>
    <property type="evidence" value="ECO:0007669"/>
    <property type="project" value="UniProtKB-UniRule"/>
</dbReference>
<dbReference type="GO" id="GO:0003735">
    <property type="term" value="F:structural constituent of ribosome"/>
    <property type="evidence" value="ECO:0007669"/>
    <property type="project" value="InterPro"/>
</dbReference>
<dbReference type="GO" id="GO:0006412">
    <property type="term" value="P:translation"/>
    <property type="evidence" value="ECO:0007669"/>
    <property type="project" value="UniProtKB-UniRule"/>
</dbReference>
<dbReference type="FunFam" id="3.30.420.80:FF:000001">
    <property type="entry name" value="30S ribosomal protein S11"/>
    <property type="match status" value="1"/>
</dbReference>
<dbReference type="Gene3D" id="3.30.420.80">
    <property type="entry name" value="Ribosomal protein S11"/>
    <property type="match status" value="1"/>
</dbReference>
<dbReference type="HAMAP" id="MF_01310">
    <property type="entry name" value="Ribosomal_uS11"/>
    <property type="match status" value="1"/>
</dbReference>
<dbReference type="InterPro" id="IPR001971">
    <property type="entry name" value="Ribosomal_uS11"/>
</dbReference>
<dbReference type="InterPro" id="IPR019981">
    <property type="entry name" value="Ribosomal_uS11_bac-type"/>
</dbReference>
<dbReference type="InterPro" id="IPR018102">
    <property type="entry name" value="Ribosomal_uS11_CS"/>
</dbReference>
<dbReference type="InterPro" id="IPR036967">
    <property type="entry name" value="Ribosomal_uS11_sf"/>
</dbReference>
<dbReference type="NCBIfam" id="NF003698">
    <property type="entry name" value="PRK05309.1"/>
    <property type="match status" value="1"/>
</dbReference>
<dbReference type="NCBIfam" id="TIGR03632">
    <property type="entry name" value="uS11_bact"/>
    <property type="match status" value="1"/>
</dbReference>
<dbReference type="PANTHER" id="PTHR11759">
    <property type="entry name" value="40S RIBOSOMAL PROTEIN S14/30S RIBOSOMAL PROTEIN S11"/>
    <property type="match status" value="1"/>
</dbReference>
<dbReference type="Pfam" id="PF00411">
    <property type="entry name" value="Ribosomal_S11"/>
    <property type="match status" value="1"/>
</dbReference>
<dbReference type="PIRSF" id="PIRSF002131">
    <property type="entry name" value="Ribosomal_S11"/>
    <property type="match status" value="1"/>
</dbReference>
<dbReference type="SUPFAM" id="SSF53137">
    <property type="entry name" value="Translational machinery components"/>
    <property type="match status" value="1"/>
</dbReference>
<dbReference type="PROSITE" id="PS00054">
    <property type="entry name" value="RIBOSOMAL_S11"/>
    <property type="match status" value="1"/>
</dbReference>
<reference key="1">
    <citation type="journal article" date="2007" name="Science">
        <title>The Calyptogena magnifica chemoautotrophic symbiont genome.</title>
        <authorList>
            <person name="Newton I.L.G."/>
            <person name="Woyke T."/>
            <person name="Auchtung T.A."/>
            <person name="Dilly G.F."/>
            <person name="Dutton R.J."/>
            <person name="Fisher M.C."/>
            <person name="Fontanez K.M."/>
            <person name="Lau E."/>
            <person name="Stewart F.J."/>
            <person name="Richardson P.M."/>
            <person name="Barry K.W."/>
            <person name="Saunders E."/>
            <person name="Detter J.C."/>
            <person name="Wu D."/>
            <person name="Eisen J.A."/>
            <person name="Cavanaugh C.M."/>
        </authorList>
    </citation>
    <scope>NUCLEOTIDE SEQUENCE [LARGE SCALE GENOMIC DNA]</scope>
</reference>